<sequence>MTAIKLIVGLGNPGTEYEQTRHNAGALFVERIAEKQGINLVADRKYFGLTGRFSHQGQDIRLLIPTTYMNRSGQAVAALAGFFRIKPEEILVAHDELDLPPGVAKLKTGGGHGGHNGLRDIIAQLGNQNTFHRLRLGIGHPGVASMVSNFVLGRAPRAEQEKLDASIDFALGVLPDIFAGEWNRAMKNLHSQKA</sequence>
<organism>
    <name type="scientific">Pseudomonas fluorescens (strain ATCC BAA-477 / NRRL B-23932 / Pf-5)</name>
    <dbReference type="NCBI Taxonomy" id="220664"/>
    <lineage>
        <taxon>Bacteria</taxon>
        <taxon>Pseudomonadati</taxon>
        <taxon>Pseudomonadota</taxon>
        <taxon>Gammaproteobacteria</taxon>
        <taxon>Pseudomonadales</taxon>
        <taxon>Pseudomonadaceae</taxon>
        <taxon>Pseudomonas</taxon>
    </lineage>
</organism>
<name>PTH_PSEF5</name>
<dbReference type="EC" id="3.1.1.29" evidence="1"/>
<dbReference type="EMBL" id="CP000076">
    <property type="protein sequence ID" value="AAY94387.2"/>
    <property type="molecule type" value="Genomic_DNA"/>
</dbReference>
<dbReference type="RefSeq" id="WP_011063412.1">
    <property type="nucleotide sequence ID" value="NC_004129.6"/>
</dbReference>
<dbReference type="SMR" id="Q4K688"/>
<dbReference type="STRING" id="220664.PFL_5167"/>
<dbReference type="GeneID" id="57478124"/>
<dbReference type="KEGG" id="pfl:PFL_5167"/>
<dbReference type="PATRIC" id="fig|220664.5.peg.5279"/>
<dbReference type="eggNOG" id="COG0193">
    <property type="taxonomic scope" value="Bacteria"/>
</dbReference>
<dbReference type="HOGENOM" id="CLU_062456_3_1_6"/>
<dbReference type="Proteomes" id="UP000008540">
    <property type="component" value="Chromosome"/>
</dbReference>
<dbReference type="GO" id="GO:0005737">
    <property type="term" value="C:cytoplasm"/>
    <property type="evidence" value="ECO:0007669"/>
    <property type="project" value="UniProtKB-SubCell"/>
</dbReference>
<dbReference type="GO" id="GO:0004045">
    <property type="term" value="F:peptidyl-tRNA hydrolase activity"/>
    <property type="evidence" value="ECO:0007669"/>
    <property type="project" value="UniProtKB-UniRule"/>
</dbReference>
<dbReference type="GO" id="GO:0000049">
    <property type="term" value="F:tRNA binding"/>
    <property type="evidence" value="ECO:0007669"/>
    <property type="project" value="UniProtKB-UniRule"/>
</dbReference>
<dbReference type="GO" id="GO:0006515">
    <property type="term" value="P:protein quality control for misfolded or incompletely synthesized proteins"/>
    <property type="evidence" value="ECO:0007669"/>
    <property type="project" value="UniProtKB-UniRule"/>
</dbReference>
<dbReference type="GO" id="GO:0072344">
    <property type="term" value="P:rescue of stalled ribosome"/>
    <property type="evidence" value="ECO:0007669"/>
    <property type="project" value="UniProtKB-UniRule"/>
</dbReference>
<dbReference type="CDD" id="cd00462">
    <property type="entry name" value="PTH"/>
    <property type="match status" value="1"/>
</dbReference>
<dbReference type="FunFam" id="3.40.50.1470:FF:000001">
    <property type="entry name" value="Peptidyl-tRNA hydrolase"/>
    <property type="match status" value="1"/>
</dbReference>
<dbReference type="Gene3D" id="3.40.50.1470">
    <property type="entry name" value="Peptidyl-tRNA hydrolase"/>
    <property type="match status" value="1"/>
</dbReference>
<dbReference type="HAMAP" id="MF_00083">
    <property type="entry name" value="Pept_tRNA_hydro_bact"/>
    <property type="match status" value="1"/>
</dbReference>
<dbReference type="InterPro" id="IPR001328">
    <property type="entry name" value="Pept_tRNA_hydro"/>
</dbReference>
<dbReference type="InterPro" id="IPR018171">
    <property type="entry name" value="Pept_tRNA_hydro_CS"/>
</dbReference>
<dbReference type="InterPro" id="IPR036416">
    <property type="entry name" value="Pept_tRNA_hydro_sf"/>
</dbReference>
<dbReference type="NCBIfam" id="TIGR00447">
    <property type="entry name" value="pth"/>
    <property type="match status" value="1"/>
</dbReference>
<dbReference type="PANTHER" id="PTHR17224">
    <property type="entry name" value="PEPTIDYL-TRNA HYDROLASE"/>
    <property type="match status" value="1"/>
</dbReference>
<dbReference type="PANTHER" id="PTHR17224:SF1">
    <property type="entry name" value="PEPTIDYL-TRNA HYDROLASE"/>
    <property type="match status" value="1"/>
</dbReference>
<dbReference type="Pfam" id="PF01195">
    <property type="entry name" value="Pept_tRNA_hydro"/>
    <property type="match status" value="1"/>
</dbReference>
<dbReference type="SUPFAM" id="SSF53178">
    <property type="entry name" value="Peptidyl-tRNA hydrolase-like"/>
    <property type="match status" value="1"/>
</dbReference>
<dbReference type="PROSITE" id="PS01195">
    <property type="entry name" value="PEPT_TRNA_HYDROL_1"/>
    <property type="match status" value="1"/>
</dbReference>
<dbReference type="PROSITE" id="PS01196">
    <property type="entry name" value="PEPT_TRNA_HYDROL_2"/>
    <property type="match status" value="1"/>
</dbReference>
<gene>
    <name evidence="1" type="primary">pth</name>
    <name type="ordered locus">PFL_5167</name>
</gene>
<protein>
    <recommendedName>
        <fullName evidence="1">Peptidyl-tRNA hydrolase</fullName>
        <shortName evidence="1">Pth</shortName>
        <ecNumber evidence="1">3.1.1.29</ecNumber>
    </recommendedName>
</protein>
<evidence type="ECO:0000255" key="1">
    <source>
        <dbReference type="HAMAP-Rule" id="MF_00083"/>
    </source>
</evidence>
<proteinExistence type="inferred from homology"/>
<comment type="function">
    <text evidence="1">Hydrolyzes ribosome-free peptidyl-tRNAs (with 1 or more amino acids incorporated), which drop off the ribosome during protein synthesis, or as a result of ribosome stalling.</text>
</comment>
<comment type="function">
    <text evidence="1">Catalyzes the release of premature peptidyl moieties from peptidyl-tRNA molecules trapped in stalled 50S ribosomal subunits, and thus maintains levels of free tRNAs and 50S ribosomes.</text>
</comment>
<comment type="catalytic activity">
    <reaction evidence="1">
        <text>an N-acyl-L-alpha-aminoacyl-tRNA + H2O = an N-acyl-L-amino acid + a tRNA + H(+)</text>
        <dbReference type="Rhea" id="RHEA:54448"/>
        <dbReference type="Rhea" id="RHEA-COMP:10123"/>
        <dbReference type="Rhea" id="RHEA-COMP:13883"/>
        <dbReference type="ChEBI" id="CHEBI:15377"/>
        <dbReference type="ChEBI" id="CHEBI:15378"/>
        <dbReference type="ChEBI" id="CHEBI:59874"/>
        <dbReference type="ChEBI" id="CHEBI:78442"/>
        <dbReference type="ChEBI" id="CHEBI:138191"/>
        <dbReference type="EC" id="3.1.1.29"/>
    </reaction>
</comment>
<comment type="subunit">
    <text evidence="1">Monomer.</text>
</comment>
<comment type="subcellular location">
    <subcellularLocation>
        <location evidence="1">Cytoplasm</location>
    </subcellularLocation>
</comment>
<comment type="similarity">
    <text evidence="1">Belongs to the PTH family.</text>
</comment>
<reference key="1">
    <citation type="journal article" date="2005" name="Nat. Biotechnol.">
        <title>Complete genome sequence of the plant commensal Pseudomonas fluorescens Pf-5.</title>
        <authorList>
            <person name="Paulsen I.T."/>
            <person name="Press C.M."/>
            <person name="Ravel J."/>
            <person name="Kobayashi D.Y."/>
            <person name="Myers G.S.A."/>
            <person name="Mavrodi D.V."/>
            <person name="DeBoy R.T."/>
            <person name="Seshadri R."/>
            <person name="Ren Q."/>
            <person name="Madupu R."/>
            <person name="Dodson R.J."/>
            <person name="Durkin A.S."/>
            <person name="Brinkac L.M."/>
            <person name="Daugherty S.C."/>
            <person name="Sullivan S.A."/>
            <person name="Rosovitz M.J."/>
            <person name="Gwinn M.L."/>
            <person name="Zhou L."/>
            <person name="Schneider D.J."/>
            <person name="Cartinhour S.W."/>
            <person name="Nelson W.C."/>
            <person name="Weidman J."/>
            <person name="Watkins K."/>
            <person name="Tran K."/>
            <person name="Khouri H."/>
            <person name="Pierson E.A."/>
            <person name="Pierson L.S. III"/>
            <person name="Thomashow L.S."/>
            <person name="Loper J.E."/>
        </authorList>
    </citation>
    <scope>NUCLEOTIDE SEQUENCE [LARGE SCALE GENOMIC DNA]</scope>
    <source>
        <strain>ATCC BAA-477 / NRRL B-23932 / Pf-5</strain>
    </source>
</reference>
<feature type="chain" id="PRO_0000264079" description="Peptidyl-tRNA hydrolase">
    <location>
        <begin position="1"/>
        <end position="194"/>
    </location>
</feature>
<feature type="active site" description="Proton acceptor" evidence="1">
    <location>
        <position position="22"/>
    </location>
</feature>
<feature type="binding site" evidence="1">
    <location>
        <position position="17"/>
    </location>
    <ligand>
        <name>tRNA</name>
        <dbReference type="ChEBI" id="CHEBI:17843"/>
    </ligand>
</feature>
<feature type="binding site" evidence="1">
    <location>
        <position position="68"/>
    </location>
    <ligand>
        <name>tRNA</name>
        <dbReference type="ChEBI" id="CHEBI:17843"/>
    </ligand>
</feature>
<feature type="binding site" evidence="1">
    <location>
        <position position="70"/>
    </location>
    <ligand>
        <name>tRNA</name>
        <dbReference type="ChEBI" id="CHEBI:17843"/>
    </ligand>
</feature>
<feature type="binding site" evidence="1">
    <location>
        <position position="116"/>
    </location>
    <ligand>
        <name>tRNA</name>
        <dbReference type="ChEBI" id="CHEBI:17843"/>
    </ligand>
</feature>
<feature type="site" description="Discriminates between blocked and unblocked aminoacyl-tRNA" evidence="1">
    <location>
        <position position="12"/>
    </location>
</feature>
<feature type="site" description="Stabilizes the basic form of H active site to accept a proton" evidence="1">
    <location>
        <position position="95"/>
    </location>
</feature>
<accession>Q4K688</accession>
<keyword id="KW-0963">Cytoplasm</keyword>
<keyword id="KW-0378">Hydrolase</keyword>
<keyword id="KW-0694">RNA-binding</keyword>
<keyword id="KW-0820">tRNA-binding</keyword>